<keyword id="KW-0027">Amidation</keyword>
<keyword id="KW-0165">Cleavage on pair of basic residues</keyword>
<keyword id="KW-1015">Disulfide bond</keyword>
<keyword id="KW-0964">Secreted</keyword>
<keyword id="KW-0732">Signal</keyword>
<keyword id="KW-0800">Toxin</keyword>
<protein>
    <recommendedName>
        <fullName>Conotoxin Mi11.1</fullName>
    </recommendedName>
</protein>
<evidence type="ECO:0000250" key="1"/>
<evidence type="ECO:0000250" key="2">
    <source>
        <dbReference type="UniProtKB" id="Q7Z094"/>
    </source>
</evidence>
<evidence type="ECO:0000255" key="3"/>
<evidence type="ECO:0000305" key="4"/>
<accession>P69498</accession>
<accession>Q59AA4</accession>
<reference key="1">
    <citation type="journal article" date="2004" name="Toxicon">
        <title>Novel conopeptides of the I-superfamily occur in several clades of cone snails.</title>
        <authorList>
            <person name="Kauferstein S."/>
            <person name="Huys I."/>
            <person name="Kuch U."/>
            <person name="Melaun C."/>
            <person name="Tytgat J."/>
            <person name="Mebs D."/>
        </authorList>
    </citation>
    <scope>NUCLEOTIDE SEQUENCE [MRNA]</scope>
    <source>
        <tissue>Venom duct</tissue>
    </source>
</reference>
<reference key="2">
    <citation type="journal article" date="2006" name="J. Pept. Sci.">
        <title>I-conotoxin superfamily revisited.</title>
        <authorList>
            <person name="Mondal S."/>
            <person name="Babu R.M."/>
            <person name="Bhavna R."/>
            <person name="Ramakumar S."/>
        </authorList>
    </citation>
    <scope>PREDICTION OF FUNCTION</scope>
</reference>
<name>I2_CONMI</name>
<comment type="subcellular location">
    <subcellularLocation>
        <location evidence="1">Secreted</location>
    </subcellularLocation>
</comment>
<comment type="tissue specificity">
    <text>Expressed by the venom duct.</text>
</comment>
<comment type="domain">
    <text>The cysteine framework is XI (C-C-CC-CC-C-C).</text>
</comment>
<comment type="similarity">
    <text evidence="4">Belongs to the conotoxin I2 superfamily.</text>
</comment>
<dbReference type="EMBL" id="AJ746189">
    <property type="protein sequence ID" value="CAG34097.1"/>
    <property type="molecule type" value="mRNA"/>
</dbReference>
<dbReference type="SMR" id="P69498"/>
<dbReference type="ConoServer" id="1084">
    <property type="toxin name" value="Mi11.1 precursor"/>
</dbReference>
<dbReference type="GO" id="GO:0005576">
    <property type="term" value="C:extracellular region"/>
    <property type="evidence" value="ECO:0007669"/>
    <property type="project" value="UniProtKB-SubCell"/>
</dbReference>
<dbReference type="GO" id="GO:0090729">
    <property type="term" value="F:toxin activity"/>
    <property type="evidence" value="ECO:0007669"/>
    <property type="project" value="UniProtKB-KW"/>
</dbReference>
<dbReference type="InterPro" id="IPR013141">
    <property type="entry name" value="Conotoxin-I_CS"/>
</dbReference>
<dbReference type="InterPro" id="IPR020242">
    <property type="entry name" value="Conotoxin_I2"/>
</dbReference>
<dbReference type="Pfam" id="PF17557">
    <property type="entry name" value="Conotoxin_I2"/>
    <property type="match status" value="1"/>
</dbReference>
<dbReference type="PROSITE" id="PS60019">
    <property type="entry name" value="I_CONOTOXIN"/>
    <property type="match status" value="1"/>
</dbReference>
<feature type="signal peptide" evidence="3">
    <location>
        <begin position="1"/>
        <end position="26"/>
    </location>
</feature>
<feature type="chain" id="PRO_0000035096" description="Conotoxin Mi11.1">
    <location>
        <begin position="27"/>
        <end position="60"/>
    </location>
</feature>
<feature type="propeptide" id="PRO_0000035097" evidence="1">
    <location>
        <begin position="64"/>
        <end position="68"/>
    </location>
</feature>
<feature type="modified residue" description="Tyrosine amide" evidence="1">
    <location>
        <position position="60"/>
    </location>
</feature>
<feature type="disulfide bond" evidence="2">
    <location>
        <begin position="29"/>
        <end position="43"/>
    </location>
</feature>
<feature type="disulfide bond" evidence="2">
    <location>
        <begin position="36"/>
        <end position="48"/>
    </location>
</feature>
<feature type="disulfide bond" evidence="2">
    <location>
        <begin position="42"/>
        <end position="52"/>
    </location>
</feature>
<feature type="disulfide bond" evidence="2">
    <location>
        <begin position="47"/>
        <end position="56"/>
    </location>
</feature>
<feature type="sequence conflict" description="In Ref. 1." evidence="4" ref="1">
    <original>L</original>
    <variation>F</variation>
    <location>
        <position position="3"/>
    </location>
</feature>
<feature type="sequence conflict" description="In Ref. 1." evidence="4" ref="1">
    <original>S</original>
    <variation>F</variation>
    <location>
        <position position="57"/>
    </location>
</feature>
<organism>
    <name type="scientific">Conus miles</name>
    <name type="common">Soldier cone</name>
    <name type="synonym">Mile cone</name>
    <dbReference type="NCBI Taxonomy" id="69564"/>
    <lineage>
        <taxon>Eukaryota</taxon>
        <taxon>Metazoa</taxon>
        <taxon>Spiralia</taxon>
        <taxon>Lophotrochozoa</taxon>
        <taxon>Mollusca</taxon>
        <taxon>Gastropoda</taxon>
        <taxon>Caenogastropoda</taxon>
        <taxon>Neogastropoda</taxon>
        <taxon>Conoidea</taxon>
        <taxon>Conidae</taxon>
        <taxon>Conus</taxon>
        <taxon>Rhizoconus</taxon>
    </lineage>
</organism>
<proteinExistence type="evidence at transcript level"/>
<sequence length="68" mass="7795">MMLRLTSVSCFLLVIACLNLFQVVLTRRCFPPGTFCSRYLPCCSGRCCSGWCTRRCSPRYGKRATFQE</sequence>